<gene>
    <name evidence="1" type="primary">psaB</name>
    <name type="ordered locus">PMN2A_1083</name>
</gene>
<name>PSAB_PROMT</name>
<protein>
    <recommendedName>
        <fullName evidence="1">Photosystem I P700 chlorophyll a apoprotein A2</fullName>
        <ecNumber evidence="1">1.97.1.12</ecNumber>
    </recommendedName>
    <alternativeName>
        <fullName evidence="1">PsaB</fullName>
    </alternativeName>
</protein>
<proteinExistence type="inferred from homology"/>
<comment type="function">
    <text evidence="1">PsaA and PsaB bind P700, the primary electron donor of photosystem I (PSI), as well as the electron acceptors A0, A1 and FX. PSI is a plastocyanin/cytochrome c6-ferredoxin oxidoreductase, converting photonic excitation into a charge separation, which transfers an electron from the donor P700 chlorophyll pair to the spectroscopically characterized acceptors A0, A1, FX, FA and FB in turn. Oxidized P700 is reduced on the lumenal side of the thylakoid membrane by plastocyanin or cytochrome c6.</text>
</comment>
<comment type="catalytic activity">
    <reaction evidence="1">
        <text>reduced [plastocyanin] + hnu + oxidized [2Fe-2S]-[ferredoxin] = oxidized [plastocyanin] + reduced [2Fe-2S]-[ferredoxin]</text>
        <dbReference type="Rhea" id="RHEA:30407"/>
        <dbReference type="Rhea" id="RHEA-COMP:10000"/>
        <dbReference type="Rhea" id="RHEA-COMP:10001"/>
        <dbReference type="Rhea" id="RHEA-COMP:10039"/>
        <dbReference type="Rhea" id="RHEA-COMP:10040"/>
        <dbReference type="ChEBI" id="CHEBI:29036"/>
        <dbReference type="ChEBI" id="CHEBI:30212"/>
        <dbReference type="ChEBI" id="CHEBI:33737"/>
        <dbReference type="ChEBI" id="CHEBI:33738"/>
        <dbReference type="ChEBI" id="CHEBI:49552"/>
        <dbReference type="EC" id="1.97.1.12"/>
    </reaction>
</comment>
<comment type="cofactor">
    <text evidence="1">PSI electron transfer chain: 5 divinyl chlorophyll a, 1 divinyl chlorophyll a', 2 phylloquinones and 3 4Fe-4S clusters. PSI core antenna: 90 divinyl chlorophyll a, 22 carotenoids, 3 phospholipids and 1 galactolipid. P700 is a divinyl chlorophyll a/divinyl chlorophyll a' dimer, A0 is one or more divinyl chlorophyll a, A1 is one or both phylloquinones and FX is a shared 4Fe-4S iron-sulfur center.</text>
</comment>
<comment type="subunit">
    <text evidence="1">The PsaA/B heterodimer binds the P700 divinyl chlorophyll special pair and subsequent electron acceptors. PSI consists of a core antenna complex that captures photons, and an electron transfer chain that converts photonic excitation into a charge separation. The cyanobacterial PSI reaction center is composed of one copy each of PsaA,B,C,D,E,F,I,J,K,L,M and X, and forms trimeric complexes.</text>
</comment>
<comment type="subcellular location">
    <subcellularLocation>
        <location evidence="1">Cellular thylakoid membrane</location>
        <topology evidence="1">Multi-pass membrane protein</topology>
    </subcellularLocation>
</comment>
<comment type="similarity">
    <text evidence="1">Belongs to the PsaA/PsaB family.</text>
</comment>
<dbReference type="EC" id="1.97.1.12" evidence="1"/>
<dbReference type="EMBL" id="CP000095">
    <property type="protein sequence ID" value="AAZ58573.1"/>
    <property type="molecule type" value="Genomic_DNA"/>
</dbReference>
<dbReference type="RefSeq" id="WP_011295427.1">
    <property type="nucleotide sequence ID" value="NC_007335.2"/>
</dbReference>
<dbReference type="SMR" id="Q46IV5"/>
<dbReference type="STRING" id="59920.PMN2A_1083"/>
<dbReference type="KEGG" id="pmn:PMN2A_1083"/>
<dbReference type="HOGENOM" id="CLU_016126_1_0_3"/>
<dbReference type="OrthoDB" id="499313at2"/>
<dbReference type="PhylomeDB" id="Q46IV5"/>
<dbReference type="Proteomes" id="UP000002535">
    <property type="component" value="Chromosome"/>
</dbReference>
<dbReference type="GO" id="GO:0009522">
    <property type="term" value="C:photosystem I"/>
    <property type="evidence" value="ECO:0007669"/>
    <property type="project" value="UniProtKB-KW"/>
</dbReference>
<dbReference type="GO" id="GO:0031676">
    <property type="term" value="C:plasma membrane-derived thylakoid membrane"/>
    <property type="evidence" value="ECO:0007669"/>
    <property type="project" value="UniProtKB-SubCell"/>
</dbReference>
<dbReference type="GO" id="GO:0051539">
    <property type="term" value="F:4 iron, 4 sulfur cluster binding"/>
    <property type="evidence" value="ECO:0007669"/>
    <property type="project" value="UniProtKB-KW"/>
</dbReference>
<dbReference type="GO" id="GO:0016168">
    <property type="term" value="F:chlorophyll binding"/>
    <property type="evidence" value="ECO:0007669"/>
    <property type="project" value="UniProtKB-KW"/>
</dbReference>
<dbReference type="GO" id="GO:0009055">
    <property type="term" value="F:electron transfer activity"/>
    <property type="evidence" value="ECO:0007669"/>
    <property type="project" value="UniProtKB-UniRule"/>
</dbReference>
<dbReference type="GO" id="GO:0000287">
    <property type="term" value="F:magnesium ion binding"/>
    <property type="evidence" value="ECO:0007669"/>
    <property type="project" value="UniProtKB-UniRule"/>
</dbReference>
<dbReference type="GO" id="GO:0016491">
    <property type="term" value="F:oxidoreductase activity"/>
    <property type="evidence" value="ECO:0007669"/>
    <property type="project" value="UniProtKB-KW"/>
</dbReference>
<dbReference type="GO" id="GO:0015979">
    <property type="term" value="P:photosynthesis"/>
    <property type="evidence" value="ECO:0007669"/>
    <property type="project" value="UniProtKB-UniRule"/>
</dbReference>
<dbReference type="FunFam" id="1.20.1130.10:FF:000001">
    <property type="entry name" value="Photosystem I P700 chlorophyll a apoprotein A2"/>
    <property type="match status" value="1"/>
</dbReference>
<dbReference type="Gene3D" id="1.20.1130.10">
    <property type="entry name" value="Photosystem I PsaA/PsaB"/>
    <property type="match status" value="1"/>
</dbReference>
<dbReference type="HAMAP" id="MF_00482">
    <property type="entry name" value="PSI_PsaB"/>
    <property type="match status" value="1"/>
</dbReference>
<dbReference type="InterPro" id="IPR001280">
    <property type="entry name" value="PSI_PsaA/B"/>
</dbReference>
<dbReference type="InterPro" id="IPR020586">
    <property type="entry name" value="PSI_PsaA/B_CS"/>
</dbReference>
<dbReference type="InterPro" id="IPR036408">
    <property type="entry name" value="PSI_PsaA/B_sf"/>
</dbReference>
<dbReference type="InterPro" id="IPR006244">
    <property type="entry name" value="PSI_PsaB"/>
</dbReference>
<dbReference type="NCBIfam" id="TIGR01336">
    <property type="entry name" value="psaB"/>
    <property type="match status" value="1"/>
</dbReference>
<dbReference type="PANTHER" id="PTHR30128">
    <property type="entry name" value="OUTER MEMBRANE PROTEIN, OMPA-RELATED"/>
    <property type="match status" value="1"/>
</dbReference>
<dbReference type="PANTHER" id="PTHR30128:SF19">
    <property type="entry name" value="PHOTOSYSTEM I P700 CHLOROPHYLL A APOPROTEIN A1-RELATED"/>
    <property type="match status" value="1"/>
</dbReference>
<dbReference type="Pfam" id="PF00223">
    <property type="entry name" value="PsaA_PsaB"/>
    <property type="match status" value="1"/>
</dbReference>
<dbReference type="PIRSF" id="PIRSF002905">
    <property type="entry name" value="PSI_A"/>
    <property type="match status" value="1"/>
</dbReference>
<dbReference type="PRINTS" id="PR00257">
    <property type="entry name" value="PHOTSYSPSAAB"/>
</dbReference>
<dbReference type="SUPFAM" id="SSF81558">
    <property type="entry name" value="Photosystem I subunits PsaA/PsaB"/>
    <property type="match status" value="1"/>
</dbReference>
<dbReference type="PROSITE" id="PS00419">
    <property type="entry name" value="PHOTOSYSTEM_I_PSAAB"/>
    <property type="match status" value="1"/>
</dbReference>
<accession>Q46IV5</accession>
<keyword id="KW-0004">4Fe-4S</keyword>
<keyword id="KW-0148">Chlorophyll</keyword>
<keyword id="KW-0157">Chromophore</keyword>
<keyword id="KW-0249">Electron transport</keyword>
<keyword id="KW-0408">Iron</keyword>
<keyword id="KW-0411">Iron-sulfur</keyword>
<keyword id="KW-0460">Magnesium</keyword>
<keyword id="KW-0472">Membrane</keyword>
<keyword id="KW-0479">Metal-binding</keyword>
<keyword id="KW-0560">Oxidoreductase</keyword>
<keyword id="KW-0602">Photosynthesis</keyword>
<keyword id="KW-0603">Photosystem I</keyword>
<keyword id="KW-1185">Reference proteome</keyword>
<keyword id="KW-0793">Thylakoid</keyword>
<keyword id="KW-0812">Transmembrane</keyword>
<keyword id="KW-1133">Transmembrane helix</keyword>
<keyword id="KW-0813">Transport</keyword>
<reference key="1">
    <citation type="journal article" date="2007" name="PLoS Genet.">
        <title>Patterns and implications of gene gain and loss in the evolution of Prochlorococcus.</title>
        <authorList>
            <person name="Kettler G.C."/>
            <person name="Martiny A.C."/>
            <person name="Huang K."/>
            <person name="Zucker J."/>
            <person name="Coleman M.L."/>
            <person name="Rodrigue S."/>
            <person name="Chen F."/>
            <person name="Lapidus A."/>
            <person name="Ferriera S."/>
            <person name="Johnson J."/>
            <person name="Steglich C."/>
            <person name="Church G.M."/>
            <person name="Richardson P."/>
            <person name="Chisholm S.W."/>
        </authorList>
    </citation>
    <scope>NUCLEOTIDE SEQUENCE [LARGE SCALE GENOMIC DNA]</scope>
    <source>
        <strain>NATL2A</strain>
    </source>
</reference>
<evidence type="ECO:0000255" key="1">
    <source>
        <dbReference type="HAMAP-Rule" id="MF_00482"/>
    </source>
</evidence>
<sequence length="742" mass="82846">MATKFPSFSQGLAQDPTTRRIWYGIATAHDFESHDGMTEEQLYQKLFSTHFGHLAIIGLWVAGNLFHIAWQGNFEQWVLDPLHTRPIAHAIWDPHFGQGLTDALTQAGATSPVNIAYSGLYHWWYTIGMRTNEQLFQGAIFINILVCWLLFAGWLHLQPKYRPSLAWFKNAESQLNHHLAVLFGFSSIAWTGHLIHVAIPESRGIHVGWENWLTVMPHPEGLTPFFSGNWGAYAQNPDSIDAVFGTSQGAGTAIFTFLGGLHPQSESLWLTDIAHHHLAIGVVFIIAGHMYRTNFGIGHSLKEIIEAHNTSHPKDPHRGYFGIKHNGLFETVNNSLHFQLGLALASLGVACSLVAQHMGALPSYAFIARDYTTQSALYTHHQYIAMFLMVGAFSHGAIFFVRDYDPELNKDNVLARILSTKEALISHLSWVTMLLGFHTLGIYVHNDVVVAFGTPEKQILIEPVFAQFAQAASGKMMYGFNALLANASSSASIAANSMPGNHYWMDMINRPDALTNFLPIGPADFLVHHAIALGLHTTALILIKGALDARGTKLIPDKKDLGFAFPCDGPGRGGTCDSSSWDATYLAMFWALNTIAWITFYWHWKHLAIWMGNTAQFNESGTYLMGWFRDYLWLNSSQLINGYNPFGVNALSPWAWMFLFGHLIWATGFMFLISWRGYWQELIETLVWAHQRTPIANLVGWRDKPVALSIVQARLVGLTHFTVGNFVTFGAFVIASTSGKFG</sequence>
<feature type="chain" id="PRO_0000300022" description="Photosystem I P700 chlorophyll a apoprotein A2">
    <location>
        <begin position="1"/>
        <end position="742"/>
    </location>
</feature>
<feature type="transmembrane region" description="Helical; Name=I" evidence="1">
    <location>
        <begin position="46"/>
        <end position="69"/>
    </location>
</feature>
<feature type="transmembrane region" description="Helical; Name=II" evidence="1">
    <location>
        <begin position="135"/>
        <end position="158"/>
    </location>
</feature>
<feature type="transmembrane region" description="Helical; Name=III" evidence="1">
    <location>
        <begin position="175"/>
        <end position="199"/>
    </location>
</feature>
<feature type="transmembrane region" description="Helical; Name=IV" evidence="1">
    <location>
        <begin position="273"/>
        <end position="291"/>
    </location>
</feature>
<feature type="transmembrane region" description="Helical; Name=V" evidence="1">
    <location>
        <begin position="336"/>
        <end position="359"/>
    </location>
</feature>
<feature type="transmembrane region" description="Helical; Name=VI" evidence="1">
    <location>
        <begin position="375"/>
        <end position="401"/>
    </location>
</feature>
<feature type="transmembrane region" description="Helical; Name=VII" evidence="1">
    <location>
        <begin position="423"/>
        <end position="445"/>
    </location>
</feature>
<feature type="transmembrane region" description="Helical; Name=VIII" evidence="1">
    <location>
        <begin position="525"/>
        <end position="543"/>
    </location>
</feature>
<feature type="transmembrane region" description="Helical; Name=IX" evidence="1">
    <location>
        <begin position="583"/>
        <end position="604"/>
    </location>
</feature>
<feature type="transmembrane region" description="Helical; Name=X" evidence="1">
    <location>
        <begin position="651"/>
        <end position="673"/>
    </location>
</feature>
<feature type="transmembrane region" description="Helical; Name=XI" evidence="1">
    <location>
        <begin position="715"/>
        <end position="735"/>
    </location>
</feature>
<feature type="binding site" evidence="1">
    <location>
        <position position="567"/>
    </location>
    <ligand>
        <name>[4Fe-4S] cluster</name>
        <dbReference type="ChEBI" id="CHEBI:49883"/>
        <note>ligand shared between dimeric partners</note>
    </ligand>
</feature>
<feature type="binding site" evidence="1">
    <location>
        <position position="576"/>
    </location>
    <ligand>
        <name>[4Fe-4S] cluster</name>
        <dbReference type="ChEBI" id="CHEBI:49883"/>
        <note>ligand shared between dimeric partners</note>
    </ligand>
</feature>
<feature type="binding site" description="axial binding residue" evidence="1">
    <location>
        <position position="662"/>
    </location>
    <ligand>
        <name>divinyl chlorophyll a</name>
        <dbReference type="ChEBI" id="CHEBI:73095"/>
        <label>B1</label>
    </ligand>
    <ligandPart>
        <name>Mg</name>
        <dbReference type="ChEBI" id="CHEBI:25107"/>
    </ligandPart>
</feature>
<feature type="binding site" description="axial binding residue" evidence="1">
    <location>
        <position position="670"/>
    </location>
    <ligand>
        <name>divinyl chlorophyll a</name>
        <dbReference type="ChEBI" id="CHEBI:73095"/>
        <label>B3</label>
    </ligand>
    <ligandPart>
        <name>Mg</name>
        <dbReference type="ChEBI" id="CHEBI:25107"/>
    </ligandPart>
</feature>
<feature type="binding site" evidence="1">
    <location>
        <position position="678"/>
    </location>
    <ligand>
        <name>divinyl chlorophyll a</name>
        <dbReference type="ChEBI" id="CHEBI:73095"/>
        <label>B3</label>
    </ligand>
</feature>
<feature type="binding site" evidence="1">
    <location>
        <position position="679"/>
    </location>
    <ligand>
        <name>phylloquinone</name>
        <dbReference type="ChEBI" id="CHEBI:18067"/>
        <label>B</label>
    </ligand>
</feature>
<organism>
    <name type="scientific">Prochlorococcus marinus (strain NATL2A)</name>
    <dbReference type="NCBI Taxonomy" id="59920"/>
    <lineage>
        <taxon>Bacteria</taxon>
        <taxon>Bacillati</taxon>
        <taxon>Cyanobacteriota</taxon>
        <taxon>Cyanophyceae</taxon>
        <taxon>Synechococcales</taxon>
        <taxon>Prochlorococcaceae</taxon>
        <taxon>Prochlorococcus</taxon>
    </lineage>
</organism>